<keyword id="KW-0067">ATP-binding</keyword>
<keyword id="KW-0190">Covalent protein-DNA linkage</keyword>
<keyword id="KW-0235">DNA replication</keyword>
<keyword id="KW-0238">DNA-binding</keyword>
<keyword id="KW-0255">Endonuclease</keyword>
<keyword id="KW-0347">Helicase</keyword>
<keyword id="KW-1048">Host nucleus</keyword>
<keyword id="KW-0945">Host-virus interaction</keyword>
<keyword id="KW-0378">Hydrolase</keyword>
<keyword id="KW-0479">Metal-binding</keyword>
<keyword id="KW-0511">Multifunctional enzyme</keyword>
<keyword id="KW-0540">Nuclease</keyword>
<keyword id="KW-0547">Nucleotide-binding</keyword>
<keyword id="KW-0548">Nucleotidyltransferase</keyword>
<keyword id="KW-1185">Reference proteome</keyword>
<keyword id="KW-0808">Transferase</keyword>
<accession>P14991</accession>
<accession>O39485</accession>
<accession>Q91J25</accession>
<organism>
    <name type="scientific">Beet curly top virus (strain California/Logan)</name>
    <name type="common">BCTV</name>
    <dbReference type="NCBI Taxonomy" id="268960"/>
    <lineage>
        <taxon>Viruses</taxon>
        <taxon>Monodnaviria</taxon>
        <taxon>Shotokuvirae</taxon>
        <taxon>Cressdnaviricota</taxon>
        <taxon>Repensiviricetes</taxon>
        <taxon>Geplafuvirales</taxon>
        <taxon>Geminiviridae</taxon>
        <taxon>Curtovirus</taxon>
        <taxon>Beet curly top virus</taxon>
    </lineage>
</organism>
<proteinExistence type="inferred from homology"/>
<comment type="function">
    <text evidence="1">Essential for the replication of viral ssDNA. The closed circular ssDNA genome is first converted to a superhelical dsDNA. Rep binds a specific region at the genome origin of replication. It introduces an endonucleolytic nick within the conserved sequence 5'-TAATATTAC-3' in the intergenic region of the genome present in all geminiviruses, thereby initiating the rolling circle replication (RCR). Following cleavage, binds covalently to the 5'-phosphate of DNA as a tyrosyl ester. The cleavage gives rise to a free 3'-OH that serves as a primer for the cellular DNA polymerase. The polymerase synthesizes the (+) strand DNA by rolling circle mechanism. After one round of replication, a Rep-catalyzed nucleotidyl transfer reaction releases a circular single-stranded virus genome, thereby terminating the replication. Displays origin-specific DNA cleavage, nucleotidyl transferase, ATPase and helicase activities (By similarity).</text>
</comment>
<comment type="cofactor">
    <cofactor evidence="3">
        <name>Mg(2+)</name>
        <dbReference type="ChEBI" id="CHEBI:18420"/>
    </cofactor>
    <cofactor evidence="3">
        <name>Mn(2+)</name>
        <dbReference type="ChEBI" id="CHEBI:29035"/>
    </cofactor>
    <text evidence="3">Divalent metal cations, possibly Mg(2+) or Mn(2+).</text>
</comment>
<comment type="subunit">
    <text evidence="1">Homooligomer. Interacts with the replication enhancer protein (REn). Interacts with host retinoblastoma-related protein 1 (RBR1), and may thereby induce the transcription of host replicative enzymes even if the cell is not dividing anymore. Interacts with host PCNA. Interacts with host SCE1 protein (By similarity).</text>
</comment>
<comment type="subcellular location">
    <subcellularLocation>
        <location evidence="1">Host nucleus</location>
    </subcellularLocation>
</comment>
<comment type="domain">
    <text evidence="1">There are 3 rolling circle replication (RCR) motifs. RCR-2 is probably involved in metal coordination. RCR-3 is required for phosphodiester bond cleavage for initiation of RCR (By similarity).</text>
</comment>
<comment type="similarity">
    <text evidence="4">Belongs to the geminiviridae Rep protein family.</text>
</comment>
<sequence length="358" mass="40695">MPPTKRFRIQAKNIFLTYPQCSLSKEEALEQIQGIQLSSNKKYIKIARELHEDGQPHLHVLLQLEGKVQITNIRLFDLVSPTRSAHFHPNIQGAKSSSDVKSYVDKDGDTIEWGEFQIDGRSARGGQQTANDSYAKALNATSLEQALQILKEEQPKDYFLQHHNLLNNAQKIFQRAPDPWTPLFPLSSFTNVPEEMQEWADAYFGVDAAARPLRYNSIIVEGDSRTGKTMWARSLGAHNYITGHLDFSLRTYYDEVEYNVIDDVDPTYLKMKHWKHLIGAQKEWQTNLKYGKPRVIKGGIPCIILCNPGPESSYQQFLEKPENEALKSWTLHNSTFCKLQGPLFNNQAAASSQGDSTL</sequence>
<feature type="chain" id="PRO_0000222201" description="Replication-associated protein">
    <location>
        <begin position="1"/>
        <end position="358"/>
    </location>
</feature>
<feature type="domain" description="CRESS-DNA virus Rep endonuclease" evidence="3">
    <location>
        <begin position="8"/>
        <end position="116"/>
    </location>
</feature>
<feature type="region of interest" description="Binding to RBR1" evidence="1">
    <location>
        <begin position="143"/>
        <end position="153"/>
    </location>
</feature>
<feature type="region of interest" description="Oligomerization" evidence="1">
    <location>
        <begin position="156"/>
        <end position="176"/>
    </location>
</feature>
<feature type="short sequence motif" description="RCR-1" evidence="3">
    <location>
        <begin position="15"/>
        <end position="18"/>
    </location>
</feature>
<feature type="short sequence motif" description="RCR-2" evidence="3">
    <location>
        <begin position="57"/>
        <end position="59"/>
    </location>
</feature>
<feature type="short sequence motif" description="RCR-3" evidence="3">
    <location>
        <begin position="103"/>
        <end position="106"/>
    </location>
</feature>
<feature type="active site" description="For DNA cleavage activity" evidence="3">
    <location>
        <position position="103"/>
    </location>
</feature>
<feature type="binding site" evidence="3">
    <location>
        <position position="49"/>
    </location>
    <ligand>
        <name>a divalent metal cation</name>
        <dbReference type="ChEBI" id="CHEBI:60240"/>
    </ligand>
</feature>
<feature type="binding site" evidence="3">
    <location>
        <position position="57"/>
    </location>
    <ligand>
        <name>a divalent metal cation</name>
        <dbReference type="ChEBI" id="CHEBI:60240"/>
    </ligand>
</feature>
<feature type="binding site" evidence="3">
    <location>
        <position position="59"/>
    </location>
    <ligand>
        <name>a divalent metal cation</name>
        <dbReference type="ChEBI" id="CHEBI:60240"/>
    </ligand>
</feature>
<feature type="binding site" evidence="3">
    <location>
        <position position="107"/>
    </location>
    <ligand>
        <name>a divalent metal cation</name>
        <dbReference type="ChEBI" id="CHEBI:60240"/>
    </ligand>
</feature>
<feature type="binding site" evidence="2">
    <location>
        <begin position="222"/>
        <end position="229"/>
    </location>
    <ligand>
        <name>ATP</name>
        <dbReference type="ChEBI" id="CHEBI:30616"/>
    </ligand>
</feature>
<feature type="sequence variant" description="In strain: Infectious clone pBCT028.">
    <original>G</original>
    <variation>R</variation>
    <location>
        <position position="34"/>
    </location>
</feature>
<feature type="sequence variant" description="In strain: Infectious clone pBCT028.">
    <original>G</original>
    <variation>R</variation>
    <location>
        <position position="93"/>
    </location>
</feature>
<feature type="sequence variant" description="In strain: Infectious clone pBCT028.">
    <original>E</original>
    <variation>D</variation>
    <location>
        <position position="144"/>
    </location>
</feature>
<feature type="sequence variant" description="In strain: Infectious clone pBCT028.">
    <original>A</original>
    <variation>P</variation>
    <location>
        <position position="176"/>
    </location>
</feature>
<feature type="sequence variant" description="In strain: Infectious clone pBCT028.">
    <original>L</original>
    <variation>P</variation>
    <location>
        <position position="249"/>
    </location>
</feature>
<protein>
    <recommendedName>
        <fullName>Replication-associated protein</fullName>
        <shortName>Rep</shortName>
        <ecNumber>2.7.7.-</ecNumber>
        <ecNumber>3.1.21.-</ecNumber>
    </recommendedName>
    <alternativeName>
        <fullName>40.8 kDa protein</fullName>
    </alternativeName>
    <alternativeName>
        <fullName>Protein C1</fullName>
    </alternativeName>
</protein>
<reference key="1">
    <citation type="journal article" date="1986" name="EMBO J.">
        <title>The nucleotide sequence of an infectious clone of the geminivirus beet curly top virus.</title>
        <authorList>
            <person name="Stanley J."/>
            <person name="Markham P.G."/>
            <person name="Callis R.J."/>
            <person name="Pinner M.S."/>
        </authorList>
    </citation>
    <scope>NUCLEOTIDE SEQUENCE [GENOMIC DNA]</scope>
    <source>
        <strain>Infectious clone pBCT028</strain>
    </source>
</reference>
<reference key="2">
    <citation type="submission" date="2010-03" db="EMBL/GenBank/DDBJ databases">
        <authorList>
            <person name="Stanley J."/>
        </authorList>
    </citation>
    <scope>SEQUENCE REVISION</scope>
    <source>
        <strain>Infectious clone pBCT028</strain>
    </source>
</reference>
<reference key="3">
    <citation type="submission" date="2001-05" db="EMBL/GenBank/DDBJ databases">
        <authorList>
            <person name="Bisaro D.M."/>
            <person name="Hormuzdi S.G."/>
        </authorList>
    </citation>
    <scope>NUCLEOTIDE SEQUENCE [GENOMIC DNA]</scope>
</reference>
<evidence type="ECO:0000250" key="1"/>
<evidence type="ECO:0000255" key="2"/>
<evidence type="ECO:0000255" key="3">
    <source>
        <dbReference type="PROSITE-ProRule" id="PRU01364"/>
    </source>
</evidence>
<evidence type="ECO:0000305" key="4"/>
<name>REP_BCTVC</name>
<gene>
    <name type="ORF">C1</name>
</gene>
<dbReference type="EC" id="2.7.7.-"/>
<dbReference type="EC" id="3.1.21.-"/>
<dbReference type="EMBL" id="M24597">
    <property type="protein sequence ID" value="AAA42751.2"/>
    <property type="molecule type" value="Genomic_DNA"/>
</dbReference>
<dbReference type="EMBL" id="AF379637">
    <property type="protein sequence ID" value="AAK59260.1"/>
    <property type="molecule type" value="Genomic_DNA"/>
</dbReference>
<dbReference type="PIR" id="S28360">
    <property type="entry name" value="S28360"/>
</dbReference>
<dbReference type="SMR" id="P14991"/>
<dbReference type="KEGG" id="vg:2546433"/>
<dbReference type="Proteomes" id="UP000006542">
    <property type="component" value="Genome"/>
</dbReference>
<dbReference type="GO" id="GO:0042025">
    <property type="term" value="C:host cell nucleus"/>
    <property type="evidence" value="ECO:0007669"/>
    <property type="project" value="UniProtKB-SubCell"/>
</dbReference>
<dbReference type="GO" id="GO:0005524">
    <property type="term" value="F:ATP binding"/>
    <property type="evidence" value="ECO:0007669"/>
    <property type="project" value="UniProtKB-KW"/>
</dbReference>
<dbReference type="GO" id="GO:0003677">
    <property type="term" value="F:DNA binding"/>
    <property type="evidence" value="ECO:0007669"/>
    <property type="project" value="UniProtKB-KW"/>
</dbReference>
<dbReference type="GO" id="GO:0016888">
    <property type="term" value="F:endodeoxyribonuclease activity, producing 5'-phosphomonoesters"/>
    <property type="evidence" value="ECO:0007669"/>
    <property type="project" value="InterPro"/>
</dbReference>
<dbReference type="GO" id="GO:0004386">
    <property type="term" value="F:helicase activity"/>
    <property type="evidence" value="ECO:0007669"/>
    <property type="project" value="UniProtKB-KW"/>
</dbReference>
<dbReference type="GO" id="GO:0046872">
    <property type="term" value="F:metal ion binding"/>
    <property type="evidence" value="ECO:0007669"/>
    <property type="project" value="UniProtKB-KW"/>
</dbReference>
<dbReference type="GO" id="GO:0016779">
    <property type="term" value="F:nucleotidyltransferase activity"/>
    <property type="evidence" value="ECO:0007669"/>
    <property type="project" value="UniProtKB-KW"/>
</dbReference>
<dbReference type="GO" id="GO:0005198">
    <property type="term" value="F:structural molecule activity"/>
    <property type="evidence" value="ECO:0007669"/>
    <property type="project" value="InterPro"/>
</dbReference>
<dbReference type="GO" id="GO:0006260">
    <property type="term" value="P:DNA replication"/>
    <property type="evidence" value="ECO:0007669"/>
    <property type="project" value="UniProtKB-KW"/>
</dbReference>
<dbReference type="GO" id="GO:0039684">
    <property type="term" value="P:rolling circle single-stranded viral DNA replication"/>
    <property type="evidence" value="ECO:0000314"/>
    <property type="project" value="UniProtKB"/>
</dbReference>
<dbReference type="FunFam" id="3.40.1310.20:FF:000001">
    <property type="entry name" value="Replication-associated protein"/>
    <property type="match status" value="1"/>
</dbReference>
<dbReference type="Gene3D" id="3.40.1310.20">
    <property type="match status" value="1"/>
</dbReference>
<dbReference type="InterPro" id="IPR049912">
    <property type="entry name" value="CRESS_DNA_REP"/>
</dbReference>
<dbReference type="InterPro" id="IPR001301">
    <property type="entry name" value="Gemini_AL1_CLV"/>
</dbReference>
<dbReference type="InterPro" id="IPR001191">
    <property type="entry name" value="Gemini_AL1_REP"/>
</dbReference>
<dbReference type="InterPro" id="IPR022692">
    <property type="entry name" value="Gemini_AL1_REP_central"/>
</dbReference>
<dbReference type="Pfam" id="PF00799">
    <property type="entry name" value="Gemini_AL1"/>
    <property type="match status" value="1"/>
</dbReference>
<dbReference type="Pfam" id="PF08283">
    <property type="entry name" value="Gemini_AL1_M"/>
    <property type="match status" value="1"/>
</dbReference>
<dbReference type="PRINTS" id="PR00227">
    <property type="entry name" value="GEMCOATAL1"/>
</dbReference>
<dbReference type="PRINTS" id="PR00228">
    <property type="entry name" value="GEMCOATCLVL1"/>
</dbReference>
<dbReference type="SUPFAM" id="SSF55464">
    <property type="entry name" value="Origin of replication-binding domain, RBD-like"/>
    <property type="match status" value="1"/>
</dbReference>
<dbReference type="PROSITE" id="PS52020">
    <property type="entry name" value="CRESS_DNA_REP"/>
    <property type="match status" value="1"/>
</dbReference>
<organismHost>
    <name type="scientific">Beta vulgaris</name>
    <name type="common">Sugar beet</name>
    <dbReference type="NCBI Taxonomy" id="161934"/>
</organismHost>
<organismHost>
    <name type="scientific">Capsicum</name>
    <name type="common">peppers</name>
    <dbReference type="NCBI Taxonomy" id="4071"/>
</organismHost>
<organismHost>
    <name type="scientific">Cucurbitaceae</name>
    <dbReference type="NCBI Taxonomy" id="3650"/>
</organismHost>
<organismHost>
    <name type="scientific">Linum</name>
    <dbReference type="NCBI Taxonomy" id="4005"/>
</organismHost>
<organismHost>
    <name type="scientific">Phaseolus vulgaris</name>
    <name type="common">Kidney bean</name>
    <name type="synonym">French bean</name>
    <dbReference type="NCBI Taxonomy" id="3885"/>
</organismHost>
<organismHost>
    <name type="scientific">Solanum lycopersicum</name>
    <name type="common">Tomato</name>
    <name type="synonym">Lycopersicon esculentum</name>
    <dbReference type="NCBI Taxonomy" id="4081"/>
</organismHost>
<organismHost>
    <name type="scientific">Solanum tuberosum</name>
    <name type="common">Potato</name>
    <dbReference type="NCBI Taxonomy" id="4113"/>
</organismHost>
<organismHost>
    <name type="scientific">Spinacia oleracea</name>
    <name type="common">Spinach</name>
    <dbReference type="NCBI Taxonomy" id="3562"/>
</organismHost>